<keyword id="KW-1185">Reference proteome</keyword>
<keyword id="KW-0687">Ribonucleoprotein</keyword>
<keyword id="KW-0689">Ribosomal protein</keyword>
<protein>
    <recommendedName>
        <fullName evidence="1">Small ribosomal subunit protein uS9</fullName>
    </recommendedName>
    <alternativeName>
        <fullName evidence="3">30S ribosomal protein S9</fullName>
    </alternativeName>
</protein>
<gene>
    <name evidence="1" type="primary">rpsI</name>
    <name evidence="1" type="synonym">rps9</name>
    <name type="ordered locus">Npun_R4362</name>
</gene>
<comment type="similarity">
    <text evidence="1">Belongs to the universal ribosomal protein uS9 family.</text>
</comment>
<dbReference type="EMBL" id="CP001037">
    <property type="protein sequence ID" value="ACC82735.1"/>
    <property type="molecule type" value="Genomic_DNA"/>
</dbReference>
<dbReference type="RefSeq" id="WP_012410698.1">
    <property type="nucleotide sequence ID" value="NC_010628.1"/>
</dbReference>
<dbReference type="SMR" id="B2ITM7"/>
<dbReference type="STRING" id="63737.Npun_R4362"/>
<dbReference type="EnsemblBacteria" id="ACC82735">
    <property type="protein sequence ID" value="ACC82735"/>
    <property type="gene ID" value="Npun_R4362"/>
</dbReference>
<dbReference type="KEGG" id="npu:Npun_R4362"/>
<dbReference type="eggNOG" id="COG0103">
    <property type="taxonomic scope" value="Bacteria"/>
</dbReference>
<dbReference type="HOGENOM" id="CLU_046483_2_1_3"/>
<dbReference type="OrthoDB" id="9803965at2"/>
<dbReference type="PhylomeDB" id="B2ITM7"/>
<dbReference type="Proteomes" id="UP000001191">
    <property type="component" value="Chromosome"/>
</dbReference>
<dbReference type="GO" id="GO:0022627">
    <property type="term" value="C:cytosolic small ribosomal subunit"/>
    <property type="evidence" value="ECO:0007669"/>
    <property type="project" value="TreeGrafter"/>
</dbReference>
<dbReference type="GO" id="GO:0003723">
    <property type="term" value="F:RNA binding"/>
    <property type="evidence" value="ECO:0007669"/>
    <property type="project" value="TreeGrafter"/>
</dbReference>
<dbReference type="GO" id="GO:0003735">
    <property type="term" value="F:structural constituent of ribosome"/>
    <property type="evidence" value="ECO:0007669"/>
    <property type="project" value="InterPro"/>
</dbReference>
<dbReference type="GO" id="GO:0006412">
    <property type="term" value="P:translation"/>
    <property type="evidence" value="ECO:0007669"/>
    <property type="project" value="UniProtKB-UniRule"/>
</dbReference>
<dbReference type="FunFam" id="3.30.230.10:FF:000001">
    <property type="entry name" value="30S ribosomal protein S9"/>
    <property type="match status" value="1"/>
</dbReference>
<dbReference type="Gene3D" id="3.30.230.10">
    <property type="match status" value="1"/>
</dbReference>
<dbReference type="HAMAP" id="MF_00532_B">
    <property type="entry name" value="Ribosomal_uS9_B"/>
    <property type="match status" value="1"/>
</dbReference>
<dbReference type="InterPro" id="IPR020568">
    <property type="entry name" value="Ribosomal_Su5_D2-typ_SF"/>
</dbReference>
<dbReference type="InterPro" id="IPR000754">
    <property type="entry name" value="Ribosomal_uS9"/>
</dbReference>
<dbReference type="InterPro" id="IPR023035">
    <property type="entry name" value="Ribosomal_uS9_bac/plastid"/>
</dbReference>
<dbReference type="InterPro" id="IPR020574">
    <property type="entry name" value="Ribosomal_uS9_CS"/>
</dbReference>
<dbReference type="InterPro" id="IPR014721">
    <property type="entry name" value="Ribsml_uS5_D2-typ_fold_subgr"/>
</dbReference>
<dbReference type="NCBIfam" id="NF001099">
    <property type="entry name" value="PRK00132.1"/>
    <property type="match status" value="1"/>
</dbReference>
<dbReference type="PANTHER" id="PTHR21569">
    <property type="entry name" value="RIBOSOMAL PROTEIN S9"/>
    <property type="match status" value="1"/>
</dbReference>
<dbReference type="PANTHER" id="PTHR21569:SF1">
    <property type="entry name" value="SMALL RIBOSOMAL SUBUNIT PROTEIN US9M"/>
    <property type="match status" value="1"/>
</dbReference>
<dbReference type="Pfam" id="PF00380">
    <property type="entry name" value="Ribosomal_S9"/>
    <property type="match status" value="1"/>
</dbReference>
<dbReference type="SUPFAM" id="SSF54211">
    <property type="entry name" value="Ribosomal protein S5 domain 2-like"/>
    <property type="match status" value="1"/>
</dbReference>
<dbReference type="PROSITE" id="PS00360">
    <property type="entry name" value="RIBOSOMAL_S9"/>
    <property type="match status" value="1"/>
</dbReference>
<name>RS9_NOSP7</name>
<proteinExistence type="inferred from homology"/>
<feature type="chain" id="PRO_1000128146" description="Small ribosomal subunit protein uS9">
    <location>
        <begin position="1"/>
        <end position="138"/>
    </location>
</feature>
<feature type="region of interest" description="Disordered" evidence="2">
    <location>
        <begin position="99"/>
        <end position="138"/>
    </location>
</feature>
<feature type="compositionally biased region" description="Basic and acidic residues" evidence="2">
    <location>
        <begin position="100"/>
        <end position="118"/>
    </location>
</feature>
<feature type="compositionally biased region" description="Basic residues" evidence="2">
    <location>
        <begin position="119"/>
        <end position="138"/>
    </location>
</feature>
<reference key="1">
    <citation type="journal article" date="2013" name="Plant Physiol.">
        <title>A Nostoc punctiforme Sugar Transporter Necessary to Establish a Cyanobacterium-Plant Symbiosis.</title>
        <authorList>
            <person name="Ekman M."/>
            <person name="Picossi S."/>
            <person name="Campbell E.L."/>
            <person name="Meeks J.C."/>
            <person name="Flores E."/>
        </authorList>
    </citation>
    <scope>NUCLEOTIDE SEQUENCE [LARGE SCALE GENOMIC DNA]</scope>
    <source>
        <strain>ATCC 29133 / PCC 73102</strain>
    </source>
</reference>
<organism>
    <name type="scientific">Nostoc punctiforme (strain ATCC 29133 / PCC 73102)</name>
    <dbReference type="NCBI Taxonomy" id="63737"/>
    <lineage>
        <taxon>Bacteria</taxon>
        <taxon>Bacillati</taxon>
        <taxon>Cyanobacteriota</taxon>
        <taxon>Cyanophyceae</taxon>
        <taxon>Nostocales</taxon>
        <taxon>Nostocaceae</taxon>
        <taxon>Nostoc</taxon>
    </lineage>
</organism>
<accession>B2ITM7</accession>
<evidence type="ECO:0000255" key="1">
    <source>
        <dbReference type="HAMAP-Rule" id="MF_00532"/>
    </source>
</evidence>
<evidence type="ECO:0000256" key="2">
    <source>
        <dbReference type="SAM" id="MobiDB-lite"/>
    </source>
</evidence>
<evidence type="ECO:0000305" key="3"/>
<sequence length="138" mass="15183">MVVADANSGRAVYWGTGRRKNAVARVRLVPGTGQLTVNGKDGNLYFQFNPNYLGVIKAPLETLGLENEYDILVKAEGGGLTGQADSVRLGVARALCQLDPDNRPPLKTEGYLTRDPRAKERKKYGLHKARKAPQYSKR</sequence>